<organism>
    <name type="scientific">Geobacillus sp. (strain WCH70)</name>
    <dbReference type="NCBI Taxonomy" id="471223"/>
    <lineage>
        <taxon>Bacteria</taxon>
        <taxon>Bacillati</taxon>
        <taxon>Bacillota</taxon>
        <taxon>Bacilli</taxon>
        <taxon>Bacillales</taxon>
        <taxon>Anoxybacillaceae</taxon>
        <taxon>Geobacillus</taxon>
    </lineage>
</organism>
<proteinExistence type="inferred from homology"/>
<sequence length="388" mass="42887">MRYLTAGESHGPQLTTILEGVPAGLTLLAEHINKELARRQKGYGRGRRMQIEKDEVKIFSGVRHGKTLGSPITLVVENRDWKHWQNIMSIEPIDSAEEVKRKVTRPRPGHADLNGALKYGHRDMRNVLERSSARETTVRVAAGAVAKRILEELGIRVAGHVIEIGGVRAERMDYRSLEELQQVTEESPVRCFDEKAAVKMMEAIDEAKKNGDSIGGIVEVIVEGVPAGVGSHVHYDRKLDAKIAAAIVSINAFKGVEFGIGFEAARRPGSEVHDEIIWSKEKGFTRRTNRAGGFEGGMTTGMPIVVRGVMKPIPTLYKPLQSVDIETKEPFTASIERSDSCAVPAASVVAEAVVAWEVASAIVDQFGQDRMDLIKENVEKMRRYAREF</sequence>
<dbReference type="EC" id="4.2.3.5" evidence="1"/>
<dbReference type="EMBL" id="CP001638">
    <property type="protein sequence ID" value="ACS24856.1"/>
    <property type="molecule type" value="Genomic_DNA"/>
</dbReference>
<dbReference type="SMR" id="C5D3E1"/>
<dbReference type="STRING" id="471223.GWCH70_2146"/>
<dbReference type="KEGG" id="gwc:GWCH70_2146"/>
<dbReference type="eggNOG" id="COG0082">
    <property type="taxonomic scope" value="Bacteria"/>
</dbReference>
<dbReference type="HOGENOM" id="CLU_034547_2_0_9"/>
<dbReference type="OrthoDB" id="9771806at2"/>
<dbReference type="UniPathway" id="UPA00053">
    <property type="reaction ID" value="UER00090"/>
</dbReference>
<dbReference type="GO" id="GO:0005829">
    <property type="term" value="C:cytosol"/>
    <property type="evidence" value="ECO:0007669"/>
    <property type="project" value="TreeGrafter"/>
</dbReference>
<dbReference type="GO" id="GO:0004107">
    <property type="term" value="F:chorismate synthase activity"/>
    <property type="evidence" value="ECO:0007669"/>
    <property type="project" value="UniProtKB-UniRule"/>
</dbReference>
<dbReference type="GO" id="GO:0010181">
    <property type="term" value="F:FMN binding"/>
    <property type="evidence" value="ECO:0007669"/>
    <property type="project" value="TreeGrafter"/>
</dbReference>
<dbReference type="GO" id="GO:0008652">
    <property type="term" value="P:amino acid biosynthetic process"/>
    <property type="evidence" value="ECO:0007669"/>
    <property type="project" value="UniProtKB-KW"/>
</dbReference>
<dbReference type="GO" id="GO:0009073">
    <property type="term" value="P:aromatic amino acid family biosynthetic process"/>
    <property type="evidence" value="ECO:0007669"/>
    <property type="project" value="UniProtKB-KW"/>
</dbReference>
<dbReference type="GO" id="GO:0009423">
    <property type="term" value="P:chorismate biosynthetic process"/>
    <property type="evidence" value="ECO:0007669"/>
    <property type="project" value="UniProtKB-UniRule"/>
</dbReference>
<dbReference type="CDD" id="cd07304">
    <property type="entry name" value="Chorismate_synthase"/>
    <property type="match status" value="1"/>
</dbReference>
<dbReference type="FunFam" id="3.60.150.10:FF:000002">
    <property type="entry name" value="Chorismate synthase"/>
    <property type="match status" value="1"/>
</dbReference>
<dbReference type="Gene3D" id="3.60.150.10">
    <property type="entry name" value="Chorismate synthase AroC"/>
    <property type="match status" value="1"/>
</dbReference>
<dbReference type="HAMAP" id="MF_00300">
    <property type="entry name" value="Chorismate_synth"/>
    <property type="match status" value="1"/>
</dbReference>
<dbReference type="InterPro" id="IPR000453">
    <property type="entry name" value="Chorismate_synth"/>
</dbReference>
<dbReference type="InterPro" id="IPR035904">
    <property type="entry name" value="Chorismate_synth_AroC_sf"/>
</dbReference>
<dbReference type="InterPro" id="IPR020541">
    <property type="entry name" value="Chorismate_synthase_CS"/>
</dbReference>
<dbReference type="NCBIfam" id="TIGR00033">
    <property type="entry name" value="aroC"/>
    <property type="match status" value="1"/>
</dbReference>
<dbReference type="NCBIfam" id="NF003793">
    <property type="entry name" value="PRK05382.1"/>
    <property type="match status" value="1"/>
</dbReference>
<dbReference type="PANTHER" id="PTHR21085">
    <property type="entry name" value="CHORISMATE SYNTHASE"/>
    <property type="match status" value="1"/>
</dbReference>
<dbReference type="PANTHER" id="PTHR21085:SF0">
    <property type="entry name" value="CHORISMATE SYNTHASE"/>
    <property type="match status" value="1"/>
</dbReference>
<dbReference type="Pfam" id="PF01264">
    <property type="entry name" value="Chorismate_synt"/>
    <property type="match status" value="1"/>
</dbReference>
<dbReference type="PIRSF" id="PIRSF001456">
    <property type="entry name" value="Chorismate_synth"/>
    <property type="match status" value="1"/>
</dbReference>
<dbReference type="SUPFAM" id="SSF103263">
    <property type="entry name" value="Chorismate synthase, AroC"/>
    <property type="match status" value="1"/>
</dbReference>
<dbReference type="PROSITE" id="PS00787">
    <property type="entry name" value="CHORISMATE_SYNTHASE_1"/>
    <property type="match status" value="1"/>
</dbReference>
<dbReference type="PROSITE" id="PS00788">
    <property type="entry name" value="CHORISMATE_SYNTHASE_2"/>
    <property type="match status" value="1"/>
</dbReference>
<dbReference type="PROSITE" id="PS00789">
    <property type="entry name" value="CHORISMATE_SYNTHASE_3"/>
    <property type="match status" value="1"/>
</dbReference>
<comment type="function">
    <text evidence="1">Catalyzes the anti-1,4-elimination of the C-3 phosphate and the C-6 proR hydrogen from 5-enolpyruvylshikimate-3-phosphate (EPSP) to yield chorismate, which is the branch point compound that serves as the starting substrate for the three terminal pathways of aromatic amino acid biosynthesis. This reaction introduces a second double bond into the aromatic ring system.</text>
</comment>
<comment type="catalytic activity">
    <reaction evidence="1">
        <text>5-O-(1-carboxyvinyl)-3-phosphoshikimate = chorismate + phosphate</text>
        <dbReference type="Rhea" id="RHEA:21020"/>
        <dbReference type="ChEBI" id="CHEBI:29748"/>
        <dbReference type="ChEBI" id="CHEBI:43474"/>
        <dbReference type="ChEBI" id="CHEBI:57701"/>
        <dbReference type="EC" id="4.2.3.5"/>
    </reaction>
</comment>
<comment type="cofactor">
    <cofactor evidence="1">
        <name>FMNH2</name>
        <dbReference type="ChEBI" id="CHEBI:57618"/>
    </cofactor>
    <text evidence="1">Reduced FMN (FMNH(2)).</text>
</comment>
<comment type="pathway">
    <text evidence="1">Metabolic intermediate biosynthesis; chorismate biosynthesis; chorismate from D-erythrose 4-phosphate and phosphoenolpyruvate: step 7/7.</text>
</comment>
<comment type="subunit">
    <text evidence="1">Homotetramer.</text>
</comment>
<comment type="similarity">
    <text evidence="1">Belongs to the chorismate synthase family.</text>
</comment>
<evidence type="ECO:0000255" key="1">
    <source>
        <dbReference type="HAMAP-Rule" id="MF_00300"/>
    </source>
</evidence>
<accession>C5D3E1</accession>
<name>AROC_GEOSW</name>
<keyword id="KW-0028">Amino-acid biosynthesis</keyword>
<keyword id="KW-0057">Aromatic amino acid biosynthesis</keyword>
<keyword id="KW-0274">FAD</keyword>
<keyword id="KW-0285">Flavoprotein</keyword>
<keyword id="KW-0288">FMN</keyword>
<keyword id="KW-0456">Lyase</keyword>
<keyword id="KW-0521">NADP</keyword>
<reference key="1">
    <citation type="submission" date="2009-06" db="EMBL/GenBank/DDBJ databases">
        <title>Complete sequence of chromosome of Geopacillus sp. WCH70.</title>
        <authorList>
            <consortium name="US DOE Joint Genome Institute"/>
            <person name="Lucas S."/>
            <person name="Copeland A."/>
            <person name="Lapidus A."/>
            <person name="Glavina del Rio T."/>
            <person name="Dalin E."/>
            <person name="Tice H."/>
            <person name="Bruce D."/>
            <person name="Goodwin L."/>
            <person name="Pitluck S."/>
            <person name="Chertkov O."/>
            <person name="Brettin T."/>
            <person name="Detter J.C."/>
            <person name="Han C."/>
            <person name="Larimer F."/>
            <person name="Land M."/>
            <person name="Hauser L."/>
            <person name="Kyrpides N."/>
            <person name="Mikhailova N."/>
            <person name="Brumm P."/>
            <person name="Mead D.A."/>
            <person name="Richardson P."/>
        </authorList>
    </citation>
    <scope>NUCLEOTIDE SEQUENCE [LARGE SCALE GENOMIC DNA]</scope>
    <source>
        <strain>WCH70</strain>
    </source>
</reference>
<protein>
    <recommendedName>
        <fullName evidence="1">Chorismate synthase</fullName>
        <shortName evidence="1">CS</shortName>
        <ecNumber evidence="1">4.2.3.5</ecNumber>
    </recommendedName>
    <alternativeName>
        <fullName evidence="1">5-enolpyruvylshikimate-3-phosphate phospholyase</fullName>
    </alternativeName>
</protein>
<feature type="chain" id="PRO_1000204952" description="Chorismate synthase">
    <location>
        <begin position="1"/>
        <end position="388"/>
    </location>
</feature>
<feature type="binding site" evidence="1">
    <location>
        <position position="39"/>
    </location>
    <ligand>
        <name>NADP(+)</name>
        <dbReference type="ChEBI" id="CHEBI:58349"/>
    </ligand>
</feature>
<feature type="binding site" evidence="1">
    <location>
        <position position="45"/>
    </location>
    <ligand>
        <name>NADP(+)</name>
        <dbReference type="ChEBI" id="CHEBI:58349"/>
    </ligand>
</feature>
<feature type="binding site" evidence="1">
    <location>
        <begin position="130"/>
        <end position="132"/>
    </location>
    <ligand>
        <name>FMN</name>
        <dbReference type="ChEBI" id="CHEBI:58210"/>
    </ligand>
</feature>
<feature type="binding site" evidence="1">
    <location>
        <begin position="251"/>
        <end position="252"/>
    </location>
    <ligand>
        <name>FMN</name>
        <dbReference type="ChEBI" id="CHEBI:58210"/>
    </ligand>
</feature>
<feature type="binding site" evidence="1">
    <location>
        <position position="296"/>
    </location>
    <ligand>
        <name>FMN</name>
        <dbReference type="ChEBI" id="CHEBI:58210"/>
    </ligand>
</feature>
<feature type="binding site" evidence="1">
    <location>
        <begin position="311"/>
        <end position="315"/>
    </location>
    <ligand>
        <name>FMN</name>
        <dbReference type="ChEBI" id="CHEBI:58210"/>
    </ligand>
</feature>
<feature type="binding site" evidence="1">
    <location>
        <position position="337"/>
    </location>
    <ligand>
        <name>FMN</name>
        <dbReference type="ChEBI" id="CHEBI:58210"/>
    </ligand>
</feature>
<gene>
    <name evidence="1" type="primary">aroC</name>
    <name type="ordered locus">GWCH70_2146</name>
</gene>